<dbReference type="EC" id="2.3.1.50" evidence="5"/>
<dbReference type="EMBL" id="Y08686">
    <property type="protein sequence ID" value="CAA69942.1"/>
    <property type="molecule type" value="mRNA"/>
</dbReference>
<dbReference type="EMBL" id="AB011098">
    <property type="protein sequence ID" value="BAA25452.2"/>
    <property type="status" value="ALT_INIT"/>
    <property type="molecule type" value="mRNA"/>
</dbReference>
<dbReference type="EMBL" id="AF111168">
    <property type="protein sequence ID" value="AAD09621.1"/>
    <property type="molecule type" value="Genomic_DNA"/>
</dbReference>
<dbReference type="EMBL" id="BC005123">
    <property type="protein sequence ID" value="AAH05123.1"/>
    <property type="molecule type" value="mRNA"/>
</dbReference>
<dbReference type="EMBL" id="U15555">
    <property type="protein sequence ID" value="AAC50871.1"/>
    <property type="molecule type" value="mRNA"/>
</dbReference>
<dbReference type="CCDS" id="CCDS9865.1"/>
<dbReference type="PIR" id="I38873">
    <property type="entry name" value="I38873"/>
</dbReference>
<dbReference type="RefSeq" id="NP_004854.1">
    <property type="nucleotide sequence ID" value="NM_004863.4"/>
</dbReference>
<dbReference type="PDB" id="6M4N">
    <property type="method" value="EM"/>
    <property type="resolution" value="3.80 A"/>
    <property type="chains" value="B/F=1-562"/>
</dbReference>
<dbReference type="PDB" id="6M4O">
    <property type="method" value="EM"/>
    <property type="resolution" value="3.40 A"/>
    <property type="chains" value="T=1-562"/>
</dbReference>
<dbReference type="PDB" id="7CQI">
    <property type="method" value="EM"/>
    <property type="resolution" value="3.20 A"/>
    <property type="chains" value="T=1-562"/>
</dbReference>
<dbReference type="PDB" id="7CQK">
    <property type="method" value="EM"/>
    <property type="resolution" value="3.30 A"/>
    <property type="chains" value="T=1-562"/>
</dbReference>
<dbReference type="PDB" id="7K0I">
    <property type="method" value="EM"/>
    <property type="resolution" value="3.30 A"/>
    <property type="chains" value="B/E=1-544"/>
</dbReference>
<dbReference type="PDB" id="7K0J">
    <property type="method" value="EM"/>
    <property type="resolution" value="3.10 A"/>
    <property type="chains" value="B=1-562"/>
</dbReference>
<dbReference type="PDB" id="7K0K">
    <property type="method" value="EM"/>
    <property type="resolution" value="2.60 A"/>
    <property type="chains" value="B=1-562"/>
</dbReference>
<dbReference type="PDB" id="7K0L">
    <property type="method" value="EM"/>
    <property type="resolution" value="3.40 A"/>
    <property type="chains" value="B=1-562"/>
</dbReference>
<dbReference type="PDB" id="7K0M">
    <property type="method" value="EM"/>
    <property type="resolution" value="2.90 A"/>
    <property type="chains" value="B/F=1-544"/>
</dbReference>
<dbReference type="PDB" id="7K0N">
    <property type="method" value="EM"/>
    <property type="resolution" value="3.10 A"/>
    <property type="chains" value="B/F=1-562"/>
</dbReference>
<dbReference type="PDB" id="7K0O">
    <property type="method" value="EM"/>
    <property type="resolution" value="3.10 A"/>
    <property type="chains" value="B/F=1-544"/>
</dbReference>
<dbReference type="PDB" id="7K0P">
    <property type="method" value="EM"/>
    <property type="resolution" value="3.10 A"/>
    <property type="chains" value="B/F=1-544"/>
</dbReference>
<dbReference type="PDB" id="7K0Q">
    <property type="method" value="EM"/>
    <property type="resolution" value="3.30 A"/>
    <property type="chains" value="B=1-562"/>
</dbReference>
<dbReference type="PDB" id="7YIU">
    <property type="method" value="EM"/>
    <property type="resolution" value="2.90 A"/>
    <property type="chains" value="B=1-562"/>
</dbReference>
<dbReference type="PDB" id="7YIY">
    <property type="method" value="EM"/>
    <property type="resolution" value="2.70 A"/>
    <property type="chains" value="B=1-562"/>
</dbReference>
<dbReference type="PDB" id="7YJ1">
    <property type="method" value="EM"/>
    <property type="resolution" value="3.10 A"/>
    <property type="chains" value="B=1-562"/>
</dbReference>
<dbReference type="PDB" id="7YJ2">
    <property type="method" value="EM"/>
    <property type="resolution" value="2.90 A"/>
    <property type="chains" value="B=1-562"/>
</dbReference>
<dbReference type="PDBsum" id="6M4N"/>
<dbReference type="PDBsum" id="6M4O"/>
<dbReference type="PDBsum" id="7CQI"/>
<dbReference type="PDBsum" id="7CQK"/>
<dbReference type="PDBsum" id="7K0I"/>
<dbReference type="PDBsum" id="7K0J"/>
<dbReference type="PDBsum" id="7K0K"/>
<dbReference type="PDBsum" id="7K0L"/>
<dbReference type="PDBsum" id="7K0M"/>
<dbReference type="PDBsum" id="7K0N"/>
<dbReference type="PDBsum" id="7K0O"/>
<dbReference type="PDBsum" id="7K0P"/>
<dbReference type="PDBsum" id="7K0Q"/>
<dbReference type="PDBsum" id="7YIU"/>
<dbReference type="PDBsum" id="7YIY"/>
<dbReference type="PDBsum" id="7YJ1"/>
<dbReference type="PDBsum" id="7YJ2"/>
<dbReference type="EMDB" id="EMD-22601"/>
<dbReference type="EMDB" id="EMD-22608"/>
<dbReference type="EMDB" id="EMD-30081"/>
<dbReference type="EMDB" id="EMD-30082"/>
<dbReference type="EMDB" id="EMD-30441"/>
<dbReference type="EMDB" id="EMD-30442"/>
<dbReference type="EMDB" id="EMD-33864"/>
<dbReference type="EMDB" id="EMD-33866"/>
<dbReference type="EMDB" id="EMD-33868"/>
<dbReference type="EMDB" id="EMD-33869"/>
<dbReference type="SMR" id="O15270"/>
<dbReference type="BioGRID" id="114894">
    <property type="interactions" value="136"/>
</dbReference>
<dbReference type="ComplexPortal" id="CPX-6663">
    <property type="entry name" value="Serine palmitoyltransferase complex, SPTLC1-SPTLC2-SPTSSA variant"/>
</dbReference>
<dbReference type="ComplexPortal" id="CPX-6664">
    <property type="entry name" value="Serine palmitoyltransferase complex, SPTLC1-SPTLC2-SPTSSB variant"/>
</dbReference>
<dbReference type="CORUM" id="O15270"/>
<dbReference type="DIP" id="DIP-34604N"/>
<dbReference type="FunCoup" id="O15270">
    <property type="interactions" value="832"/>
</dbReference>
<dbReference type="IntAct" id="O15270">
    <property type="interactions" value="53"/>
</dbReference>
<dbReference type="MINT" id="O15270"/>
<dbReference type="STRING" id="9606.ENSP00000216484"/>
<dbReference type="BindingDB" id="O15270"/>
<dbReference type="ChEMBL" id="CHEMBL1250344"/>
<dbReference type="DrugBank" id="DB00114">
    <property type="generic name" value="Pyridoxal phosphate"/>
</dbReference>
<dbReference type="DrugBank" id="DB00133">
    <property type="generic name" value="Serine"/>
</dbReference>
<dbReference type="GlyGen" id="O15270">
    <property type="glycosylation" value="1 site, 1 O-linked glycan (1 site)"/>
</dbReference>
<dbReference type="iPTMnet" id="O15270"/>
<dbReference type="PhosphoSitePlus" id="O15270"/>
<dbReference type="SwissPalm" id="O15270"/>
<dbReference type="BioMuta" id="SPTLC2"/>
<dbReference type="jPOST" id="O15270"/>
<dbReference type="MassIVE" id="O15270"/>
<dbReference type="PaxDb" id="9606-ENSP00000216484"/>
<dbReference type="PeptideAtlas" id="O15270"/>
<dbReference type="ProteomicsDB" id="48559"/>
<dbReference type="Pumba" id="O15270"/>
<dbReference type="Antibodypedia" id="26092">
    <property type="antibodies" value="267 antibodies from 29 providers"/>
</dbReference>
<dbReference type="DNASU" id="9517"/>
<dbReference type="Ensembl" id="ENST00000216484.7">
    <property type="protein sequence ID" value="ENSP00000216484.2"/>
    <property type="gene ID" value="ENSG00000100596.8"/>
</dbReference>
<dbReference type="GeneID" id="9517"/>
<dbReference type="KEGG" id="hsa:9517"/>
<dbReference type="MANE-Select" id="ENST00000216484.7">
    <property type="protein sequence ID" value="ENSP00000216484.2"/>
    <property type="RefSeq nucleotide sequence ID" value="NM_004863.4"/>
    <property type="RefSeq protein sequence ID" value="NP_004854.1"/>
</dbReference>
<dbReference type="UCSC" id="uc001xub.4">
    <property type="organism name" value="human"/>
</dbReference>
<dbReference type="AGR" id="HGNC:11278"/>
<dbReference type="CTD" id="9517"/>
<dbReference type="DisGeNET" id="9517"/>
<dbReference type="GeneCards" id="SPTLC2"/>
<dbReference type="HGNC" id="HGNC:11278">
    <property type="gene designation" value="SPTLC2"/>
</dbReference>
<dbReference type="HPA" id="ENSG00000100596">
    <property type="expression patterns" value="Low tissue specificity"/>
</dbReference>
<dbReference type="MalaCards" id="SPTLC2"/>
<dbReference type="MIM" id="605713">
    <property type="type" value="gene"/>
</dbReference>
<dbReference type="MIM" id="613640">
    <property type="type" value="phenotype"/>
</dbReference>
<dbReference type="neXtProt" id="NX_O15270"/>
<dbReference type="OpenTargets" id="ENSG00000100596"/>
<dbReference type="Orphanet" id="36386">
    <property type="disease" value="Hereditary sensory and autonomic neuropathy type 1"/>
</dbReference>
<dbReference type="PharmGKB" id="PA36107"/>
<dbReference type="VEuPathDB" id="HostDB:ENSG00000100596"/>
<dbReference type="eggNOG" id="KOG1357">
    <property type="taxonomic scope" value="Eukaryota"/>
</dbReference>
<dbReference type="GeneTree" id="ENSGT00940000155786"/>
<dbReference type="HOGENOM" id="CLU_015846_7_1_1"/>
<dbReference type="InParanoid" id="O15270"/>
<dbReference type="OMA" id="QPRANGC"/>
<dbReference type="OrthoDB" id="65434at2759"/>
<dbReference type="PAN-GO" id="O15270">
    <property type="GO annotations" value="4 GO annotations based on evolutionary models"/>
</dbReference>
<dbReference type="PhylomeDB" id="O15270"/>
<dbReference type="TreeFam" id="TF300452"/>
<dbReference type="BioCyc" id="MetaCyc:HS02117-MONOMER"/>
<dbReference type="BRENDA" id="2.3.1.50">
    <property type="organism ID" value="2681"/>
</dbReference>
<dbReference type="PathwayCommons" id="O15270"/>
<dbReference type="Reactome" id="R-HSA-1660661">
    <property type="pathway name" value="Sphingolipid de novo biosynthesis"/>
</dbReference>
<dbReference type="SABIO-RK" id="O15270"/>
<dbReference type="SignaLink" id="O15270"/>
<dbReference type="UniPathway" id="UPA00222"/>
<dbReference type="BioGRID-ORCS" id="9517">
    <property type="hits" value="105 hits in 1178 CRISPR screens"/>
</dbReference>
<dbReference type="ChiTaRS" id="SPTLC2">
    <property type="organism name" value="human"/>
</dbReference>
<dbReference type="GeneWiki" id="SPTLC2"/>
<dbReference type="GenomeRNAi" id="9517"/>
<dbReference type="Pharos" id="O15270">
    <property type="development level" value="Tchem"/>
</dbReference>
<dbReference type="PRO" id="PR:O15270"/>
<dbReference type="Proteomes" id="UP000005640">
    <property type="component" value="Chromosome 14"/>
</dbReference>
<dbReference type="RNAct" id="O15270">
    <property type="molecule type" value="protein"/>
</dbReference>
<dbReference type="Bgee" id="ENSG00000100596">
    <property type="expression patterns" value="Expressed in corpus callosum and 194 other cell types or tissues"/>
</dbReference>
<dbReference type="ExpressionAtlas" id="O15270">
    <property type="expression patterns" value="baseline and differential"/>
</dbReference>
<dbReference type="GO" id="GO:0005789">
    <property type="term" value="C:endoplasmic reticulum membrane"/>
    <property type="evidence" value="ECO:0000304"/>
    <property type="project" value="Reactome"/>
</dbReference>
<dbReference type="GO" id="GO:0017059">
    <property type="term" value="C:serine palmitoyltransferase complex"/>
    <property type="evidence" value="ECO:0000314"/>
    <property type="project" value="UniProtKB"/>
</dbReference>
<dbReference type="GO" id="GO:0030170">
    <property type="term" value="F:pyridoxal phosphate binding"/>
    <property type="evidence" value="ECO:0007669"/>
    <property type="project" value="InterPro"/>
</dbReference>
<dbReference type="GO" id="GO:0004758">
    <property type="term" value="F:serine C-palmitoyltransferase activity"/>
    <property type="evidence" value="ECO:0000314"/>
    <property type="project" value="UniProtKB"/>
</dbReference>
<dbReference type="GO" id="GO:0060612">
    <property type="term" value="P:adipose tissue development"/>
    <property type="evidence" value="ECO:0000250"/>
    <property type="project" value="UniProtKB"/>
</dbReference>
<dbReference type="GO" id="GO:0046513">
    <property type="term" value="P:ceramide biosynthetic process"/>
    <property type="evidence" value="ECO:0000314"/>
    <property type="project" value="MGI"/>
</dbReference>
<dbReference type="GO" id="GO:1904504">
    <property type="term" value="P:positive regulation of lipophagy"/>
    <property type="evidence" value="ECO:0000314"/>
    <property type="project" value="MGI"/>
</dbReference>
<dbReference type="GO" id="GO:0046511">
    <property type="term" value="P:sphinganine biosynthetic process"/>
    <property type="evidence" value="ECO:0007669"/>
    <property type="project" value="Ensembl"/>
</dbReference>
<dbReference type="GO" id="GO:0030148">
    <property type="term" value="P:sphingolipid biosynthetic process"/>
    <property type="evidence" value="ECO:0000314"/>
    <property type="project" value="UniProtKB"/>
</dbReference>
<dbReference type="GO" id="GO:0006686">
    <property type="term" value="P:sphingomyelin biosynthetic process"/>
    <property type="evidence" value="ECO:0007669"/>
    <property type="project" value="Ensembl"/>
</dbReference>
<dbReference type="GO" id="GO:0046512">
    <property type="term" value="P:sphingosine biosynthetic process"/>
    <property type="evidence" value="ECO:0000314"/>
    <property type="project" value="ComplexPortal"/>
</dbReference>
<dbReference type="CDD" id="cd06454">
    <property type="entry name" value="KBL_like"/>
    <property type="match status" value="1"/>
</dbReference>
<dbReference type="FunFam" id="3.90.1150.10:FF:000004">
    <property type="entry name" value="2-amino-3-ketobutyrate coenzyme A ligase"/>
    <property type="match status" value="1"/>
</dbReference>
<dbReference type="FunFam" id="3.40.640.10:FF:000047">
    <property type="entry name" value="serine palmitoyltransferase 2 isoform X1"/>
    <property type="match status" value="1"/>
</dbReference>
<dbReference type="Gene3D" id="3.90.1150.10">
    <property type="entry name" value="Aspartate Aminotransferase, domain 1"/>
    <property type="match status" value="1"/>
</dbReference>
<dbReference type="Gene3D" id="3.40.640.10">
    <property type="entry name" value="Type I PLP-dependent aspartate aminotransferase-like (Major domain)"/>
    <property type="match status" value="1"/>
</dbReference>
<dbReference type="InterPro" id="IPR001917">
    <property type="entry name" value="Aminotrans_II_pyridoxalP_BS"/>
</dbReference>
<dbReference type="InterPro" id="IPR004839">
    <property type="entry name" value="Aminotransferase_I/II_large"/>
</dbReference>
<dbReference type="InterPro" id="IPR050087">
    <property type="entry name" value="AON_synthase_class-II"/>
</dbReference>
<dbReference type="InterPro" id="IPR015424">
    <property type="entry name" value="PyrdxlP-dep_Trfase"/>
</dbReference>
<dbReference type="InterPro" id="IPR015421">
    <property type="entry name" value="PyrdxlP-dep_Trfase_major"/>
</dbReference>
<dbReference type="InterPro" id="IPR015422">
    <property type="entry name" value="PyrdxlP-dep_Trfase_small"/>
</dbReference>
<dbReference type="PANTHER" id="PTHR13693">
    <property type="entry name" value="CLASS II AMINOTRANSFERASE/8-AMINO-7-OXONONANOATE SYNTHASE"/>
    <property type="match status" value="1"/>
</dbReference>
<dbReference type="PANTHER" id="PTHR13693:SF79">
    <property type="entry name" value="SERINE PALMITOYLTRANSFERASE 2"/>
    <property type="match status" value="1"/>
</dbReference>
<dbReference type="Pfam" id="PF00155">
    <property type="entry name" value="Aminotran_1_2"/>
    <property type="match status" value="1"/>
</dbReference>
<dbReference type="SUPFAM" id="SSF53383">
    <property type="entry name" value="PLP-dependent transferases"/>
    <property type="match status" value="1"/>
</dbReference>
<dbReference type="PROSITE" id="PS00599">
    <property type="entry name" value="AA_TRANSFER_CLASS_2"/>
    <property type="match status" value="1"/>
</dbReference>
<sequence length="562" mass="62924">MRPEPGGCCCRRTVRANGCVANGEVRNGYVRSSAAAAAAAAAGQIHHVTQNGGLYKRPFNEAFEETPMLVAVLTYVGYGVLTLFGYLRDFLRYWRIEKCHHATEREEQKDFVSLYQDFENFYTRNLYMRIRDNWNRPICSVPGARVDIMERQSHDYNWSFKYTGNIIKGVINMGSYNYLGFARNTGSCQEAAAKVLEEYGAGVCSTRQEIGNLDKHEELEELVARFLGVEAAMAYGMGFATNSMNIPALVGKGCLILSDELNHASLVLGARLSGATIRIFKHNNMQSLEKLLKDAIVYGQPRTRRPWKKILILVEGIYSMEGSIVRLPEVIALKKKYKAYLYLDEAHSIGALGPTGRGVVEYFGLDPEDVDVMMGTFTKSFGASGGYIGGKKELIDYLRTHSHSAVYATSLSPPVVEQIITSMKCIMGQDGTSLGKECVQQLAENTRYFRRRLKEMGFIIYGNEDSPVVPLMLYMPAKIGAFGREMLKRNIGVVVVGFPATPIIESRARFCLSAAHTKEILDTALKEIDEVGDLLQLKYSRHRLVPLLDRPFDETTYEETED</sequence>
<evidence type="ECO:0000250" key="1"/>
<evidence type="ECO:0000250" key="2">
    <source>
        <dbReference type="UniProtKB" id="P97363"/>
    </source>
</evidence>
<evidence type="ECO:0000255" key="3"/>
<evidence type="ECO:0000269" key="4">
    <source>
    </source>
</evidence>
<evidence type="ECO:0000269" key="5">
    <source>
    </source>
</evidence>
<evidence type="ECO:0000269" key="6">
    <source>
    </source>
</evidence>
<evidence type="ECO:0000269" key="7">
    <source>
    </source>
</evidence>
<evidence type="ECO:0000269" key="8">
    <source>
    </source>
</evidence>
<evidence type="ECO:0000269" key="9">
    <source>
    </source>
</evidence>
<evidence type="ECO:0000269" key="10">
    <source>
    </source>
</evidence>
<evidence type="ECO:0000269" key="11">
    <source>
    </source>
</evidence>
<evidence type="ECO:0000269" key="12">
    <source>
    </source>
</evidence>
<evidence type="ECO:0000269" key="13">
    <source>
    </source>
</evidence>
<evidence type="ECO:0000269" key="14">
    <source>
    </source>
</evidence>
<evidence type="ECO:0000269" key="15">
    <source>
    </source>
</evidence>
<evidence type="ECO:0000303" key="16">
    <source>
    </source>
</evidence>
<evidence type="ECO:0000305" key="17"/>
<evidence type="ECO:0000312" key="18">
    <source>
        <dbReference type="HGNC" id="HGNC:11278"/>
    </source>
</evidence>
<evidence type="ECO:0007744" key="19">
    <source>
        <dbReference type="PDB" id="6M4N"/>
    </source>
</evidence>
<evidence type="ECO:0007744" key="20">
    <source>
        <dbReference type="PDB" id="6M4O"/>
    </source>
</evidence>
<evidence type="ECO:0007744" key="21">
    <source>
        <dbReference type="PDB" id="7CQI"/>
    </source>
</evidence>
<evidence type="ECO:0007744" key="22">
    <source>
        <dbReference type="PDB" id="7CQK"/>
    </source>
</evidence>
<evidence type="ECO:0007744" key="23">
    <source>
        <dbReference type="PDB" id="7K0I"/>
    </source>
</evidence>
<evidence type="ECO:0007744" key="24">
    <source>
        <dbReference type="PDB" id="7K0J"/>
    </source>
</evidence>
<evidence type="ECO:0007744" key="25">
    <source>
        <dbReference type="PDB" id="7K0K"/>
    </source>
</evidence>
<evidence type="ECO:0007744" key="26">
    <source>
        <dbReference type="PDB" id="7K0L"/>
    </source>
</evidence>
<evidence type="ECO:0007744" key="27">
    <source>
        <dbReference type="PDB" id="7K0M"/>
    </source>
</evidence>
<evidence type="ECO:0007744" key="28">
    <source>
        <dbReference type="PDB" id="7K0N"/>
    </source>
</evidence>
<evidence type="ECO:0007744" key="29">
    <source>
        <dbReference type="PDB" id="7K0O"/>
    </source>
</evidence>
<evidence type="ECO:0007744" key="30">
    <source>
        <dbReference type="PDB" id="7K0P"/>
    </source>
</evidence>
<evidence type="ECO:0007744" key="31">
    <source>
        <dbReference type="PDB" id="7K0Q"/>
    </source>
</evidence>
<evidence type="ECO:0007744" key="32">
    <source>
        <dbReference type="PDB" id="7YIU"/>
    </source>
</evidence>
<evidence type="ECO:0007744" key="33">
    <source>
        <dbReference type="PDB" id="7YIY"/>
    </source>
</evidence>
<evidence type="ECO:0007744" key="34">
    <source>
        <dbReference type="PDB" id="7YJ1"/>
    </source>
</evidence>
<evidence type="ECO:0007744" key="35">
    <source>
        <dbReference type="PDB" id="7YJ2"/>
    </source>
</evidence>
<evidence type="ECO:0007829" key="36">
    <source>
        <dbReference type="PDB" id="6M4O"/>
    </source>
</evidence>
<evidence type="ECO:0007829" key="37">
    <source>
        <dbReference type="PDB" id="7CQI"/>
    </source>
</evidence>
<evidence type="ECO:0007829" key="38">
    <source>
        <dbReference type="PDB" id="7K0K"/>
    </source>
</evidence>
<evidence type="ECO:0007829" key="39">
    <source>
        <dbReference type="PDB" id="7K0M"/>
    </source>
</evidence>
<evidence type="ECO:0007829" key="40">
    <source>
        <dbReference type="PDB" id="7K0N"/>
    </source>
</evidence>
<evidence type="ECO:0007829" key="41">
    <source>
        <dbReference type="PDB" id="7YIY"/>
    </source>
</evidence>
<evidence type="ECO:0007829" key="42">
    <source>
        <dbReference type="PDB" id="7YJ1"/>
    </source>
</evidence>
<keyword id="KW-0002">3D-structure</keyword>
<keyword id="KW-0012">Acyltransferase</keyword>
<keyword id="KW-0225">Disease variant</keyword>
<keyword id="KW-0256">Endoplasmic reticulum</keyword>
<keyword id="KW-0443">Lipid metabolism</keyword>
<keyword id="KW-0472">Membrane</keyword>
<keyword id="KW-0523">Neurodegeneration</keyword>
<keyword id="KW-0622">Neuropathy</keyword>
<keyword id="KW-1267">Proteomics identification</keyword>
<keyword id="KW-0663">Pyridoxal phosphate</keyword>
<keyword id="KW-1185">Reference proteome</keyword>
<keyword id="KW-0746">Sphingolipid metabolism</keyword>
<keyword id="KW-0808">Transferase</keyword>
<keyword id="KW-0812">Transmembrane</keyword>
<keyword id="KW-1133">Transmembrane helix</keyword>
<feature type="chain" id="PRO_0000163858" description="Serine palmitoyltransferase 2">
    <location>
        <begin position="1"/>
        <end position="562"/>
    </location>
</feature>
<feature type="transmembrane region" description="Helical" evidence="3">
    <location>
        <begin position="67"/>
        <end position="87"/>
    </location>
</feature>
<feature type="modified residue" description="N6-(pyridoxal phosphate)lysine" evidence="1">
    <location>
        <position position="379"/>
    </location>
</feature>
<feature type="sequence variant" id="VAR_069525" description="In HSAN1C; reduced activity with L-serine as substrate; increased activity toward L-alanine resulting in the accumulation of 1-deoxy-sphinganine; dbSNP:rs864621998." evidence="10">
    <original>A</original>
    <variation>P</variation>
    <location>
        <position position="182"/>
    </location>
</feature>
<feature type="sequence variant" id="VAR_081286" description="In HSAN1C; late onset; slightly increased activity with L-serine as substrate; highly increased activity toward L-alanine resulting in the accumulation of 1-deoxy-sphinganine; dbSNP:rs775437084." evidence="11">
    <original>R</original>
    <variation>W</variation>
    <location>
        <position position="183"/>
    </location>
</feature>
<feature type="sequence variant" id="VAR_064798" description="In HSAN1C; partial loss of normal activity as measured by reduced formation of sphinganine; affects enzymatic affinity resulting in the accumulation of the alternative metabolite 1-deoxy-sphinganine; dbSNP:rs267607090." evidence="8">
    <original>V</original>
    <variation>M</variation>
    <location>
        <position position="359"/>
    </location>
</feature>
<feature type="sequence variant" id="VAR_064799" description="In HSAN1C; complete loss of normal activity as measured by lack of formation of sphinganine; affects enzymatic affinity resulting in the accumulation of the alternative metabolite 1-deoxy-sphinganine; dbSNP:rs267607089." evidence="8">
    <original>G</original>
    <variation>V</variation>
    <location>
        <position position="382"/>
    </location>
</feature>
<feature type="sequence variant" id="VAR_064800" description="In HSAN1C; partial loss of normal activity as measured by reduced formation of sphinganine; affects enzymatic affinity resulting in the accumulation of the alternative metabolite 1-deoxy-sphinganine; dbSNP:rs267607091." evidence="8">
    <original>I</original>
    <variation>F</variation>
    <location>
        <position position="504"/>
    </location>
</feature>
<feature type="mutagenesis site" description="Decreased catalytic activity with L-serine and palmitoyl-CoA as substrates. Does not affect the negative regulation by OMRDL3 and ceramides." evidence="14 15">
    <original>Y</original>
    <variation>A</variation>
    <location>
        <position position="122"/>
    </location>
</feature>
<feature type="mutagenesis site" description="Some decrease in catalytic activity with L-serine and palmitoyl-CoA as substrates." evidence="14">
    <original>L</original>
    <variation>W</variation>
    <location>
        <position position="126"/>
    </location>
</feature>
<feature type="mutagenesis site" description="Loss of catalytic activity with L-serine and palmitoyl-CoA as substrates." evidence="14">
    <original>I</original>
    <variation>W</variation>
    <location>
        <position position="130"/>
    </location>
</feature>
<feature type="mutagenesis site" description="Loss of catalytic activity with L-serine and palmitoyl-CoA as substrates." evidence="14">
    <original>W</original>
    <variation>A</variation>
    <location>
        <position position="134"/>
    </location>
</feature>
<feature type="mutagenesis site" description="Loss of catalytic activity with L-serine and palmitoyl-CoA as substrates." evidence="14">
    <original>Y</original>
    <variation>A</variation>
    <location>
        <position position="176"/>
    </location>
</feature>
<feature type="mutagenesis site" description="Loss of catalytic activity with L-serine and palmitoyl-CoA as substrates." evidence="14">
    <original>S</original>
    <variation>R</variation>
    <location>
        <position position="258"/>
    </location>
</feature>
<feature type="mutagenesis site" description="Reduces the dimerization propensity with SPTLC1; reduces the dimerization propensity with SPTLC1; when associated with A-305. Does not impair enzymatic activity; when associated with A-304 and A-305." evidence="13">
    <original>R</original>
    <variation>A</variation>
    <location>
        <position position="302"/>
    </location>
</feature>
<feature type="mutagenesis site" description="Reduces the dimerization propensity with SPTLC1; when associated with A-302 and A-304. Does not impair enzymatic activity; when associated with A-302 and A-304." evidence="13">
    <original>R</original>
    <variation>A</variation>
    <location>
        <position position="304"/>
    </location>
</feature>
<feature type="mutagenesis site" description="Reduces the dimerization propensity with SPTLC1; when associated with A-302 and A-304. Does not impair enzymatic activity; when associated with A-302 and A-304." evidence="13">
    <original>R</original>
    <variation>A</variation>
    <location>
        <position position="305"/>
    </location>
</feature>
<feature type="mutagenesis site" description="Decreased catalytic activity with L-serine and palmitoyl-CoA as substrates." evidence="14">
    <original>M</original>
    <variation>Q</variation>
    <location>
        <position position="320"/>
    </location>
</feature>
<feature type="mutagenesis site" description="Decreased catalytic activity with L-serine and palmitoyl-CoA as substrates." evidence="14">
    <original>T</original>
    <variation>A</variation>
    <location>
        <position position="378"/>
    </location>
</feature>
<feature type="mutagenesis site" description="Loss of catalytic activity with L-serine and palmitoyl-CoA as substrates." evidence="14">
    <original>K</original>
    <variation>A</variation>
    <location>
        <position position="379"/>
    </location>
</feature>
<feature type="mutagenesis site" description="Loss of catalytic activity with L-serine and palmitoyl-CoA as substrates." evidence="14">
    <original>I</original>
    <variation>W</variation>
    <location>
        <position position="479"/>
    </location>
</feature>
<feature type="mutagenesis site" description="Loss of negative regulation by OMRDL3 and ceramides." evidence="15">
    <original>I</original>
    <variation>R</variation>
    <location>
        <position position="503"/>
    </location>
</feature>
<feature type="mutagenesis site" description="Loss of catalytic activity with L-serine and palmitoyl-CoA as substrates." evidence="14">
    <original>R</original>
    <variation>A</variation>
    <location>
        <position position="509"/>
    </location>
</feature>
<feature type="sequence conflict" description="In Ref. 5; AAC50871." evidence="17" ref="5">
    <original>EAFE</original>
    <variation>TLAR</variation>
    <location>
        <begin position="61"/>
        <end position="64"/>
    </location>
</feature>
<feature type="sequence conflict" description="In Ref. 5; AAC50871." evidence="17" ref="5">
    <original>KECVQQLAENTRYFRRRLKEMGFIIYGNEDSPVVPLMLYMPAKIGAFGREMLKRNIGVVVVGFPATPIIESRARFCLSAAHTKEILDTALKEIDEVGDLLQLKYSRHRLVPLLDRPFDETTYEETED</original>
    <variation>NGITIHEVVQTRNTYHRFSPLSPVFSHQCLWIMLP</variation>
    <location>
        <begin position="436"/>
        <end position="562"/>
    </location>
</feature>
<feature type="strand" evidence="41">
    <location>
        <begin position="50"/>
        <end position="52"/>
    </location>
</feature>
<feature type="strand" evidence="41">
    <location>
        <begin position="54"/>
        <end position="57"/>
    </location>
</feature>
<feature type="helix" evidence="38">
    <location>
        <begin position="68"/>
        <end position="93"/>
    </location>
</feature>
<feature type="strand" evidence="37">
    <location>
        <begin position="100"/>
        <end position="102"/>
    </location>
</feature>
<feature type="helix" evidence="38">
    <location>
        <begin position="106"/>
        <end position="108"/>
    </location>
</feature>
<feature type="strand" evidence="41">
    <location>
        <begin position="109"/>
        <end position="111"/>
    </location>
</feature>
<feature type="helix" evidence="38">
    <location>
        <begin position="117"/>
        <end position="120"/>
    </location>
</feature>
<feature type="helix" evidence="38">
    <location>
        <begin position="121"/>
        <end position="125"/>
    </location>
</feature>
<feature type="helix" evidence="38">
    <location>
        <begin position="128"/>
        <end position="133"/>
    </location>
</feature>
<feature type="strand" evidence="37">
    <location>
        <begin position="137"/>
        <end position="140"/>
    </location>
</feature>
<feature type="strand" evidence="38">
    <location>
        <begin position="143"/>
        <end position="152"/>
    </location>
</feature>
<feature type="strand" evidence="41">
    <location>
        <begin position="154"/>
        <end position="159"/>
    </location>
</feature>
<feature type="strand" evidence="38">
    <location>
        <begin position="161"/>
        <end position="172"/>
    </location>
</feature>
<feature type="helix" evidence="41">
    <location>
        <begin position="178"/>
        <end position="180"/>
    </location>
</feature>
<feature type="strand" evidence="38">
    <location>
        <begin position="184"/>
        <end position="186"/>
    </location>
</feature>
<feature type="helix" evidence="38">
    <location>
        <begin position="187"/>
        <end position="199"/>
    </location>
</feature>
<feature type="strand" evidence="40">
    <location>
        <begin position="204"/>
        <end position="206"/>
    </location>
</feature>
<feature type="turn" evidence="38">
    <location>
        <begin position="207"/>
        <end position="211"/>
    </location>
</feature>
<feature type="helix" evidence="38">
    <location>
        <begin position="214"/>
        <end position="227"/>
    </location>
</feature>
<feature type="strand" evidence="38">
    <location>
        <begin position="229"/>
        <end position="236"/>
    </location>
</feature>
<feature type="helix" evidence="38">
    <location>
        <begin position="238"/>
        <end position="249"/>
    </location>
</feature>
<feature type="strand" evidence="38">
    <location>
        <begin position="255"/>
        <end position="259"/>
    </location>
</feature>
<feature type="helix" evidence="38">
    <location>
        <begin position="264"/>
        <end position="272"/>
    </location>
</feature>
<feature type="strand" evidence="38">
    <location>
        <begin position="275"/>
        <end position="280"/>
    </location>
</feature>
<feature type="helix" evidence="38">
    <location>
        <begin position="285"/>
        <end position="298"/>
    </location>
</feature>
<feature type="strand" evidence="38">
    <location>
        <begin position="300"/>
        <end position="303"/>
    </location>
</feature>
<feature type="strand" evidence="38">
    <location>
        <begin position="310"/>
        <end position="318"/>
    </location>
</feature>
<feature type="turn" evidence="38">
    <location>
        <begin position="319"/>
        <end position="322"/>
    </location>
</feature>
<feature type="helix" evidence="38">
    <location>
        <begin position="327"/>
        <end position="337"/>
    </location>
</feature>
<feature type="strand" evidence="38">
    <location>
        <begin position="340"/>
        <end position="344"/>
    </location>
</feature>
<feature type="turn" evidence="38">
    <location>
        <begin position="346"/>
        <end position="351"/>
    </location>
</feature>
<feature type="strand" evidence="41">
    <location>
        <begin position="352"/>
        <end position="356"/>
    </location>
</feature>
<feature type="helix" evidence="38">
    <location>
        <begin position="359"/>
        <end position="363"/>
    </location>
</feature>
<feature type="helix" evidence="38">
    <location>
        <begin position="367"/>
        <end position="369"/>
    </location>
</feature>
<feature type="strand" evidence="38">
    <location>
        <begin position="370"/>
        <end position="377"/>
    </location>
</feature>
<feature type="turn" evidence="38">
    <location>
        <begin position="378"/>
        <end position="381"/>
    </location>
</feature>
<feature type="strand" evidence="38">
    <location>
        <begin position="386"/>
        <end position="390"/>
    </location>
</feature>
<feature type="helix" evidence="38">
    <location>
        <begin position="392"/>
        <end position="401"/>
    </location>
</feature>
<feature type="helix" evidence="38">
    <location>
        <begin position="403"/>
        <end position="407"/>
    </location>
</feature>
<feature type="helix" evidence="38">
    <location>
        <begin position="413"/>
        <end position="426"/>
    </location>
</feature>
<feature type="turn" evidence="38">
    <location>
        <begin position="427"/>
        <end position="430"/>
    </location>
</feature>
<feature type="strand" evidence="41">
    <location>
        <begin position="431"/>
        <end position="433"/>
    </location>
</feature>
<feature type="helix" evidence="38">
    <location>
        <begin position="434"/>
        <end position="456"/>
    </location>
</feature>
<feature type="strand" evidence="39">
    <location>
        <begin position="462"/>
        <end position="465"/>
    </location>
</feature>
<feature type="strand" evidence="38">
    <location>
        <begin position="467"/>
        <end position="472"/>
    </location>
</feature>
<feature type="helix" evidence="38">
    <location>
        <begin position="476"/>
        <end position="488"/>
    </location>
</feature>
<feature type="strand" evidence="38">
    <location>
        <begin position="494"/>
        <end position="496"/>
    </location>
</feature>
<feature type="turn" evidence="38">
    <location>
        <begin position="498"/>
        <end position="500"/>
    </location>
</feature>
<feature type="turn" evidence="36">
    <location>
        <begin position="503"/>
        <end position="505"/>
    </location>
</feature>
<feature type="strand" evidence="38">
    <location>
        <begin position="507"/>
        <end position="511"/>
    </location>
</feature>
<feature type="strand" evidence="42">
    <location>
        <begin position="513"/>
        <end position="515"/>
    </location>
</feature>
<feature type="helix" evidence="38">
    <location>
        <begin position="518"/>
        <end position="535"/>
    </location>
</feature>
<reference key="1">
    <citation type="journal article" date="1997" name="Eur. J. Biochem.">
        <title>Human and murine serine-palmitoyl-CoA transferase. Cloning, expression and characterization of the key enzyme in sphingolipid synthesis.</title>
        <authorList>
            <person name="Weiss B."/>
            <person name="Stoffel W."/>
        </authorList>
    </citation>
    <scope>NUCLEOTIDE SEQUENCE [MRNA]</scope>
    <source>
        <tissue>Pancreas</tissue>
    </source>
</reference>
<reference key="2">
    <citation type="journal article" date="1998" name="DNA Res.">
        <title>Prediction of the coding sequences of unidentified human genes. IX. The complete sequences of 100 new cDNA clones from brain which can code for large proteins in vitro.</title>
        <authorList>
            <person name="Nagase T."/>
            <person name="Ishikawa K."/>
            <person name="Miyajima N."/>
            <person name="Tanaka A."/>
            <person name="Kotani H."/>
            <person name="Nomura N."/>
            <person name="Ohara O."/>
        </authorList>
    </citation>
    <scope>NUCLEOTIDE SEQUENCE [LARGE SCALE MRNA]</scope>
    <source>
        <tissue>Brain</tissue>
    </source>
</reference>
<reference key="3">
    <citation type="journal article" date="2003" name="Nature">
        <title>The DNA sequence and analysis of human chromosome 14.</title>
        <authorList>
            <person name="Heilig R."/>
            <person name="Eckenberg R."/>
            <person name="Petit J.-L."/>
            <person name="Fonknechten N."/>
            <person name="Da Silva C."/>
            <person name="Cattolico L."/>
            <person name="Levy M."/>
            <person name="Barbe V."/>
            <person name="De Berardinis V."/>
            <person name="Ureta-Vidal A."/>
            <person name="Pelletier E."/>
            <person name="Vico V."/>
            <person name="Anthouard V."/>
            <person name="Rowen L."/>
            <person name="Madan A."/>
            <person name="Qin S."/>
            <person name="Sun H."/>
            <person name="Du H."/>
            <person name="Pepin K."/>
            <person name="Artiguenave F."/>
            <person name="Robert C."/>
            <person name="Cruaud C."/>
            <person name="Bruels T."/>
            <person name="Jaillon O."/>
            <person name="Friedlander L."/>
            <person name="Samson G."/>
            <person name="Brottier P."/>
            <person name="Cure S."/>
            <person name="Segurens B."/>
            <person name="Aniere F."/>
            <person name="Samain S."/>
            <person name="Crespeau H."/>
            <person name="Abbasi N."/>
            <person name="Aiach N."/>
            <person name="Boscus D."/>
            <person name="Dickhoff R."/>
            <person name="Dors M."/>
            <person name="Dubois I."/>
            <person name="Friedman C."/>
            <person name="Gouyvenoux M."/>
            <person name="James R."/>
            <person name="Madan A."/>
            <person name="Mairey-Estrada B."/>
            <person name="Mangenot S."/>
            <person name="Martins N."/>
            <person name="Menard M."/>
            <person name="Oztas S."/>
            <person name="Ratcliffe A."/>
            <person name="Shaffer T."/>
            <person name="Trask B."/>
            <person name="Vacherie B."/>
            <person name="Bellemere C."/>
            <person name="Belser C."/>
            <person name="Besnard-Gonnet M."/>
            <person name="Bartol-Mavel D."/>
            <person name="Boutard M."/>
            <person name="Briez-Silla S."/>
            <person name="Combette S."/>
            <person name="Dufosse-Laurent V."/>
            <person name="Ferron C."/>
            <person name="Lechaplais C."/>
            <person name="Louesse C."/>
            <person name="Muselet D."/>
            <person name="Magdelenat G."/>
            <person name="Pateau E."/>
            <person name="Petit E."/>
            <person name="Sirvain-Trukniewicz P."/>
            <person name="Trybou A."/>
            <person name="Vega-Czarny N."/>
            <person name="Bataille E."/>
            <person name="Bluet E."/>
            <person name="Bordelais I."/>
            <person name="Dubois M."/>
            <person name="Dumont C."/>
            <person name="Guerin T."/>
            <person name="Haffray S."/>
            <person name="Hammadi R."/>
            <person name="Muanga J."/>
            <person name="Pellouin V."/>
            <person name="Robert D."/>
            <person name="Wunderle E."/>
            <person name="Gauguet G."/>
            <person name="Roy A."/>
            <person name="Sainte-Marthe L."/>
            <person name="Verdier J."/>
            <person name="Verdier-Discala C."/>
            <person name="Hillier L.W."/>
            <person name="Fulton L."/>
            <person name="McPherson J."/>
            <person name="Matsuda F."/>
            <person name="Wilson R."/>
            <person name="Scarpelli C."/>
            <person name="Gyapay G."/>
            <person name="Wincker P."/>
            <person name="Saurin W."/>
            <person name="Quetier F."/>
            <person name="Waterston R."/>
            <person name="Hood L."/>
            <person name="Weissenbach J."/>
        </authorList>
    </citation>
    <scope>NUCLEOTIDE SEQUENCE [LARGE SCALE GENOMIC DNA]</scope>
</reference>
<reference key="4">
    <citation type="journal article" date="2004" name="Genome Res.">
        <title>The status, quality, and expansion of the NIH full-length cDNA project: the Mammalian Gene Collection (MGC).</title>
        <authorList>
            <consortium name="The MGC Project Team"/>
        </authorList>
    </citation>
    <scope>NUCLEOTIDE SEQUENCE [LARGE SCALE MRNA]</scope>
    <source>
        <tissue>Lymph</tissue>
    </source>
</reference>
<reference key="5">
    <citation type="journal article" date="1996" name="Gene">
        <title>Sphingolipid synthesis: identification and characterization of mammalian cDNAs encoding the Lcb2 subunit of serine palmitoyltransferase.</title>
        <authorList>
            <person name="Nagiec M.M."/>
            <person name="Lester R.L."/>
            <person name="Dickson R.C."/>
        </authorList>
    </citation>
    <scope>NUCLEOTIDE SEQUENCE [MRNA] OF 60-562</scope>
    <source>
        <tissue>Pancreatic islet</tissue>
    </source>
</reference>
<reference key="6">
    <citation type="journal article" date="1993" name="Hum. Mol. Genet.">
        <title>A molecular inventory of human pancreatic islets: sequence analysis of 1000 cDNA clones.</title>
        <authorList>
            <person name="Takeda J."/>
            <person name="Yano H."/>
            <person name="Eng S."/>
            <person name="Zeng Y."/>
            <person name="Bell G.I."/>
        </authorList>
    </citation>
    <scope>NUCLEOTIDE SEQUENCE [MRNA] OF 68-144</scope>
    <source>
        <tissue>Pancreatic islet</tissue>
    </source>
</reference>
<reference key="7">
    <citation type="journal article" date="2006" name="J. Biol. Chem.">
        <title>Cloning and initial characterization of a new subunit for mammalian serine-palmitoyltransferase.</title>
        <authorList>
            <person name="Hornemann T."/>
            <person name="Richard S."/>
            <person name="Ruetti M.F."/>
            <person name="Wei Y."/>
            <person name="von Eckardstein A."/>
        </authorList>
    </citation>
    <scope>TISSUE SPECIFICITY</scope>
</reference>
<reference key="8">
    <citation type="journal article" date="2009" name="J. Biol. Chem.">
        <title>The SPTLC3 subunit of serine palmitoyltransferase generates short chain sphingoid bases.</title>
        <authorList>
            <person name="Hornemann T."/>
            <person name="Penno A."/>
            <person name="Ruetti M.F."/>
            <person name="Ernst D."/>
            <person name="Kivrak-Pfiffner F."/>
            <person name="Rohrer L."/>
            <person name="von Eckardstein A."/>
        </authorList>
    </citation>
    <scope>FUNCTION</scope>
</reference>
<reference key="9">
    <citation type="journal article" date="2009" name="Proc. Natl. Acad. Sci. U.S.A.">
        <title>Identification of small subunits of mammalian serine palmitoyltransferase that confer distinct acyl-CoA substrate specificities.</title>
        <authorList>
            <person name="Han G."/>
            <person name="Gupta S.D."/>
            <person name="Gable K."/>
            <person name="Niranjanakumari S."/>
            <person name="Moitra P."/>
            <person name="Eichler F."/>
            <person name="Brown R.H. Jr."/>
            <person name="Harmon J.M."/>
            <person name="Dunn T.M."/>
        </authorList>
    </citation>
    <scope>FUNCTION</scope>
    <scope>CATALYTIC ACTIVITY</scope>
    <scope>IDENTIFICATION IN THE SPT COMPLEX</scope>
</reference>
<reference key="10">
    <citation type="journal article" date="2010" name="Am. J. Hum. Genet.">
        <title>Mutations in the SPTLC2 subunit of serine palmitoyltransferase cause hereditary sensory and autonomic neuropathy type I.</title>
        <authorList>
            <person name="Rotthier A."/>
            <person name="Auer-Grumbach M."/>
            <person name="Janssens K."/>
            <person name="Baets J."/>
            <person name="Penno A."/>
            <person name="Almeida-Souza L."/>
            <person name="Van Hoof K."/>
            <person name="Jacobs A."/>
            <person name="De Vriendt E."/>
            <person name="Schlotter-Weigel B."/>
            <person name="Loscher W."/>
            <person name="Vondracek P."/>
            <person name="Seeman P."/>
            <person name="De Jonghe P."/>
            <person name="Van Dijck P."/>
            <person name="Jordanova A."/>
            <person name="Hornemann T."/>
            <person name="Timmerman V."/>
        </authorList>
    </citation>
    <scope>FUNCTION</scope>
    <scope>VARIANTS HSAN1C MET-359; VAL-382 AND PHE-504</scope>
    <scope>CHARACTERIZATION OF VARIANTS HSAN1C MET-359; VAL-382 AND PHE-504</scope>
</reference>
<reference key="11">
    <citation type="journal article" date="2010" name="J. Biol. Chem.">
        <title>A disease-causing mutation in the active site of serine palmitoyltransferase causes catalytic promiscuity.</title>
        <authorList>
            <person name="Gable K."/>
            <person name="Gupta S.D."/>
            <person name="Han G."/>
            <person name="Niranjanakumari S."/>
            <person name="Harmon J.M."/>
            <person name="Dunn T.M."/>
        </authorList>
    </citation>
    <scope>FUNCTION</scope>
    <scope>BIOPHYSICOCHEMICAL PROPERTIES</scope>
</reference>
<reference key="12">
    <citation type="journal article" date="2011" name="BMC Syst. Biol.">
        <title>Initial characterization of the human central proteome.</title>
        <authorList>
            <person name="Burkard T.R."/>
            <person name="Planyavsky M."/>
            <person name="Kaupe I."/>
            <person name="Breitwieser F.P."/>
            <person name="Buerckstuemmer T."/>
            <person name="Bennett K.L."/>
            <person name="Superti-Furga G."/>
            <person name="Colinge J."/>
        </authorList>
    </citation>
    <scope>IDENTIFICATION BY MASS SPECTROMETRY [LARGE SCALE ANALYSIS]</scope>
</reference>
<reference key="13">
    <citation type="journal article" date="2011" name="J. Neurosci.">
        <title>MicroRNA-137/181c regulates serine palmitoyltransferase and in turn amyloid beta, novel targets in sporadic Alzheimer's disease.</title>
        <authorList>
            <person name="Geekiyanage H."/>
            <person name="Chan C."/>
        </authorList>
    </citation>
    <scope>INDUCTION IN ALZHEIMER DISEASE</scope>
</reference>
<reference key="14">
    <citation type="journal article" date="2019" name="J. Biol. Chem.">
        <title>The ORMDL/Orm-serine palmitoyltransferase (SPT) complex is directly regulated by ceramide: Reconstitution of SPT regulation in isolated membranes.</title>
        <authorList>
            <person name="Davis D.L."/>
            <person name="Gable K."/>
            <person name="Suemitsu J."/>
            <person name="Dunn T.M."/>
            <person name="Wattenberg B.W."/>
        </authorList>
    </citation>
    <scope>REGULATION OF SPT COMPLEX ACTIVITY BY ORMDL PROTEINS IN THE PRESENCE OF CERAMIDES</scope>
</reference>
<reference evidence="23 24 25 26 27 28 29 30 31" key="15">
    <citation type="journal article" date="2021" name="Nat. Struct. Mol. Biol.">
        <title>Structural insights into the regulation of human serine palmitoyltransferase complexes.</title>
        <authorList>
            <person name="Wang Y."/>
            <person name="Niu Y."/>
            <person name="Zhang Z."/>
            <person name="Gable K."/>
            <person name="Gupta S.D."/>
            <person name="Somashekarappa N."/>
            <person name="Han G."/>
            <person name="Zhao H."/>
            <person name="Myasnikov A.G."/>
            <person name="Kalathur R.C."/>
            <person name="Dunn T.M."/>
            <person name="Lee C.H."/>
        </authorList>
    </citation>
    <scope>STRUCTURE BY ELECTRON MICROSCOPY (2.60 ANGSTROMS) IN COMPLEX WITH SPTLC1; SPTSSA AND ORMDL3</scope>
    <scope>MUTAGENESIS OF ARG-302; ARG-304 AND ARG-305</scope>
</reference>
<reference evidence="19 20 21 22" key="16">
    <citation type="journal article" date="2021" name="Nat. Struct. Mol. Biol.">
        <title>Structural insights into the assembly and substrate selectivity of human SPT-ORMDL3 complex.</title>
        <authorList>
            <person name="Li S."/>
            <person name="Xie T."/>
            <person name="Liu P."/>
            <person name="Wang L."/>
            <person name="Gong X."/>
        </authorList>
    </citation>
    <scope>STRUCTURE BY ELECTRON MICROSCOPY (3.20 ANGSTROMS) IN COMPLEX WITH SPTLC1; SPTSSA AND ORMDL3</scope>
    <scope>MUTAGENESIS OF TYR-122; LEU-126; ILE-130; TRP-134; TYR-176; SER-258; MET-320; THR-378; LYS-379; ILE-479 AND ARG-509</scope>
    <scope>BIOPHYSICOCHEMICAL PROPERTIES</scope>
</reference>
<reference evidence="32 33 34 35" key="17">
    <citation type="journal article" date="2023" name="Nat. Commun.">
        <title>Ceramide sensing by human SPT-ORMDL complex for establishing sphingolipid homeostasis.</title>
        <authorList>
            <person name="Xie T."/>
            <person name="Liu P."/>
            <person name="Wu X."/>
            <person name="Dong F."/>
            <person name="Zhang Z."/>
            <person name="Yue J."/>
            <person name="Mahawar U."/>
            <person name="Farooq F."/>
            <person name="Vohra H."/>
            <person name="Fang Q."/>
            <person name="Liu W."/>
            <person name="Wattenberg B.W."/>
            <person name="Gong X."/>
        </authorList>
    </citation>
    <scope>STRUCTURE BY ELECTRON MICROSCOPY (2.70 ANGSTROMS) IN COMPLEX WITH SPTLC1; SPTSSA AND ORMDL3</scope>
    <scope>MUTAGENESIS OF TYR-122 AND ILE-503</scope>
</reference>
<reference key="18">
    <citation type="journal article" date="2013" name="Neurology">
        <title>Hereditary sensory and autonomic neuropathy type 1 (HSANI) caused by a novel mutation in SPTLC2.</title>
        <authorList>
            <person name="Murphy S.M."/>
            <person name="Ernst D."/>
            <person name="Wei Y."/>
            <person name="Laura M."/>
            <person name="Liu Y.T."/>
            <person name="Polke J."/>
            <person name="Blake J."/>
            <person name="Winer J."/>
            <person name="Houlden H."/>
            <person name="Hornemann T."/>
            <person name="Reilly M.M."/>
        </authorList>
    </citation>
    <scope>VARIANT HSAN1C PRO-182</scope>
    <scope>CHARACTERIZATION OF VARIANT HSAN1C PRO-182</scope>
    <scope>PATHOLOGICAL MECHANISM</scope>
</reference>
<reference key="19">
    <citation type="journal article" date="2016" name="NeuroMolecular Med.">
        <title>The Variant p.(Arg183Trp) in SPTLC2 Causes Late-Onset Hereditary Sensory Neuropathy.</title>
        <authorList>
            <person name="Suriyanarayanan S."/>
            <person name="Auranen M."/>
            <person name="Toppila J."/>
            <person name="Paetau A."/>
            <person name="Shcherbii M."/>
            <person name="Palin E."/>
            <person name="Wei Y."/>
            <person name="Lohioja T."/>
            <person name="Schlotter-Weigel B."/>
            <person name="Schoen U."/>
            <person name="Abicht A."/>
            <person name="Rautenstrauss B."/>
            <person name="Tyynismaa H."/>
            <person name="Walter M.C."/>
            <person name="Hornemann T."/>
            <person name="Ylikallio E."/>
        </authorList>
    </citation>
    <scope>VARIANT HSAN1C TRP-183</scope>
    <scope>CHARACTERIZATION OF VARIANT HSAN1C TRP-183</scope>
</reference>
<accession>O15270</accession>
<accession>Q16685</accession>
<gene>
    <name evidence="18" type="primary">SPTLC2</name>
    <name type="synonym">KIAA0526</name>
    <name type="synonym">LCB2</name>
</gene>
<protein>
    <recommendedName>
        <fullName evidence="17">Serine palmitoyltransferase 2</fullName>
        <ecNumber evidence="5">2.3.1.50</ecNumber>
    </recommendedName>
    <alternativeName>
        <fullName>Long chain base biosynthesis protein 2</fullName>
        <shortName>LCB 2</shortName>
    </alternativeName>
    <alternativeName>
        <fullName>Long chain base biosynthesis protein 2a</fullName>
        <shortName evidence="16">LCB2a</shortName>
    </alternativeName>
    <alternativeName>
        <fullName>Serine-palmitoyl-CoA transferase 2</fullName>
        <shortName>SPT 2</shortName>
    </alternativeName>
</protein>
<proteinExistence type="evidence at protein level"/>
<organism>
    <name type="scientific">Homo sapiens</name>
    <name type="common">Human</name>
    <dbReference type="NCBI Taxonomy" id="9606"/>
    <lineage>
        <taxon>Eukaryota</taxon>
        <taxon>Metazoa</taxon>
        <taxon>Chordata</taxon>
        <taxon>Craniata</taxon>
        <taxon>Vertebrata</taxon>
        <taxon>Euteleostomi</taxon>
        <taxon>Mammalia</taxon>
        <taxon>Eutheria</taxon>
        <taxon>Euarchontoglires</taxon>
        <taxon>Primates</taxon>
        <taxon>Haplorrhini</taxon>
        <taxon>Catarrhini</taxon>
        <taxon>Hominidae</taxon>
        <taxon>Homo</taxon>
    </lineage>
</organism>
<comment type="function">
    <text evidence="2 5 6 7 8">Component of the serine palmitoyltransferase multisubunit enzyme (SPT) that catalyzes the initial and rate-limiting step in sphingolipid biosynthesis by condensing L-serine and activated acyl-CoA (most commonly palmitoyl-CoA) to form long-chain bases (PubMed:19416851, PubMed:19648650, PubMed:20504773, PubMed:20920666). The SPT complex is composed of SPTLC1, SPTLC2 or SPTLC3 and SPTSSA or SPTSSB. Within this complex, the heterodimer consisting of SPTLC1 and SPTLC2/SPTLC3 forms the catalytic core (PubMed:19416851). The composition of the serine palmitoyltransferase (SPT) complex determines the substrate preference (PubMed:19416851). The SPTLC1-SPTLC2-SPTSSA complex shows a strong preference for C16-CoA substrate, while the SPTLC1-SPTLC3-SPTSSA isozyme uses both C14-CoA and C16-CoA as substrates, with a slight preference for C14-CoA (PubMed:19416851, PubMed:19648650). The SPTLC1-SPTLC2-SPTSSB complex shows a strong preference for C18-CoA substrate, while the SPTLC1-SPTLC3-SPTSSB isozyme displays an ability to use a broader range of acyl-CoAs, without apparent preference (PubMed:19416851, PubMed:19648650). Crucial for adipogenesis (By similarity).</text>
</comment>
<comment type="catalytic activity">
    <reaction evidence="5">
        <text>L-serine + hexadecanoyl-CoA + H(+) = 3-oxosphinganine + CO2 + CoA</text>
        <dbReference type="Rhea" id="RHEA:14761"/>
        <dbReference type="ChEBI" id="CHEBI:15378"/>
        <dbReference type="ChEBI" id="CHEBI:16526"/>
        <dbReference type="ChEBI" id="CHEBI:33384"/>
        <dbReference type="ChEBI" id="CHEBI:57287"/>
        <dbReference type="ChEBI" id="CHEBI:57379"/>
        <dbReference type="ChEBI" id="CHEBI:58299"/>
        <dbReference type="EC" id="2.3.1.50"/>
    </reaction>
</comment>
<comment type="catalytic activity">
    <reaction evidence="5">
        <text>octadecanoyl-CoA + L-serine + H(+) = 3-oxoeicosasphinganine + CO2 + CoA</text>
        <dbReference type="Rhea" id="RHEA:33683"/>
        <dbReference type="ChEBI" id="CHEBI:15378"/>
        <dbReference type="ChEBI" id="CHEBI:16526"/>
        <dbReference type="ChEBI" id="CHEBI:33384"/>
        <dbReference type="ChEBI" id="CHEBI:57287"/>
        <dbReference type="ChEBI" id="CHEBI:57394"/>
        <dbReference type="ChEBI" id="CHEBI:65073"/>
    </reaction>
    <physiologicalReaction direction="left-to-right" evidence="5">
        <dbReference type="Rhea" id="RHEA:33684"/>
    </physiologicalReaction>
</comment>
<comment type="cofactor">
    <cofactor evidence="1">
        <name>pyridoxal 5'-phosphate</name>
        <dbReference type="ChEBI" id="CHEBI:597326"/>
    </cofactor>
</comment>
<comment type="activity regulation">
    <text evidence="15 17">SPT complex catalytic activity is negatively regulated by ORMDL proteins, including ORMDL3, in the presence of ceramides (PubMed:37308477). This mechanism allows to maintain ceramide levels at sufficient concentrations for the production of complex sphingolipids, but which prevents the accumulation of ceramides to levels that trigger apoptosis (Probable).</text>
</comment>
<comment type="biophysicochemical properties">
    <kinetics>
        <KM evidence="7">0.75 mM for L-serine</KM>
        <KM evidence="13">0.3 mM for L-serine</KM>
        <Vmax evidence="7">1350.0 pmol/min/mg enzyme</Vmax>
    </kinetics>
</comment>
<comment type="pathway">
    <text>Lipid metabolism; sphingolipid metabolism.</text>
</comment>
<comment type="subunit">
    <text evidence="5 12 13 14 15">Component of the serine palmitoyltransferase (SPT) complex, which is composed of SPTLC1, SPTLC2 or SPTLC3 and SPTSSA or SPTSSB (PubMed:19416851). The heterodimer consisting of SPTLC1 and SPTLC2/SPTLC3 forms the catalytic core of the enzyme, while SPTSSA or SPTSSB subunits determine substrate specificity (PubMed:33558762, PubMed:37308477). SPT also interacts with ORMDL proteins, especially ORMDL3, which negatively regulate SPT activity in the presence of ceramides (PubMed:30700557, PubMed:33558762, PubMed:37308477). Forms dimers of heterodimers with SPTLC1 (PubMed:33558761, PubMed:33558762).</text>
</comment>
<comment type="interaction">
    <interactant intactId="EBI-766136">
        <id>O15270</id>
    </interactant>
    <interactant intactId="EBI-1044323">
        <id>O15269</id>
        <label>SPTLC1</label>
    </interactant>
    <organismsDiffer>false</organismsDiffer>
    <experiments>3</experiments>
</comment>
<comment type="subcellular location">
    <subcellularLocation>
        <location evidence="2">Endoplasmic reticulum membrane</location>
        <topology evidence="2">Single-pass membrane protein</topology>
    </subcellularLocation>
</comment>
<comment type="tissue specificity">
    <text evidence="4">Widely expressed.</text>
</comment>
<comment type="induction">
    <text evidence="9">Expression at protein level is highly increased in brains of patients with Alzheimer disease. No changes are observed at mRNA level.</text>
</comment>
<comment type="disease" evidence="8 10 11">
    <disease id="DI-02943">
        <name>Neuropathy, hereditary sensory and autonomic, 1C</name>
        <acronym>HSAN1C</acronym>
        <description>A form of hereditary sensory and autonomic neuropathy, a genetically and clinically heterogeneous group of disorders characterized by degeneration of dorsal root and autonomic ganglion cells, and by prominent sensory abnormalities with a variable degree of motor and autonomic dysfunction. The neurological phenotype is often complicated by severe infections, osteomyelitis, and amputations. HSAN1C symptoms include loss of touch and vibration in the feet, dysesthesia and severe panmodal sensory loss in the upper and lower limbs, distal lower limb sensory loss with ulceration and osteomyelitis, and distal muscle weakness.</description>
        <dbReference type="MIM" id="613640"/>
    </disease>
    <text evidence="10 11">The disease is caused by variants affecting the gene represented in this entry. SPTLC2 disease mutations cause a shift in the substrate specificity of SPT resulting in the alternative use of L-alanine and L-glycine over its canonical substrate L-serine. This leads to the production of 1-deoxysphingolipids that cannot be correctly metabolized (PubMed:23658386).</text>
</comment>
<comment type="similarity">
    <text evidence="17">Belongs to the class-II pyridoxal-phosphate-dependent aminotransferase family.</text>
</comment>
<comment type="sequence caution" evidence="17">
    <conflict type="erroneous initiation">
        <sequence resource="EMBL-CDS" id="BAA25452"/>
    </conflict>
    <text>Extended N-terminus.</text>
</comment>
<name>SPTC2_HUMAN</name>